<proteinExistence type="inferred from homology"/>
<name>PBGP9_SOLTR</name>
<organism>
    <name type="scientific">Solenopsis tridens</name>
    <name type="common">Fire ant</name>
    <dbReference type="NCBI Taxonomy" id="310434"/>
    <lineage>
        <taxon>Eukaryota</taxon>
        <taxon>Metazoa</taxon>
        <taxon>Ecdysozoa</taxon>
        <taxon>Arthropoda</taxon>
        <taxon>Hexapoda</taxon>
        <taxon>Insecta</taxon>
        <taxon>Pterygota</taxon>
        <taxon>Neoptera</taxon>
        <taxon>Endopterygota</taxon>
        <taxon>Hymenoptera</taxon>
        <taxon>Apocrita</taxon>
        <taxon>Aculeata</taxon>
        <taxon>Formicoidea</taxon>
        <taxon>Formicidae</taxon>
        <taxon>Myrmicinae</taxon>
        <taxon>Solenopsis</taxon>
    </lineage>
</organism>
<evidence type="ECO:0000250" key="1"/>
<evidence type="ECO:0000250" key="2">
    <source>
        <dbReference type="UniProtKB" id="P20797"/>
    </source>
</evidence>
<evidence type="ECO:0000250" key="3">
    <source>
        <dbReference type="UniProtKB" id="Q8WP90"/>
    </source>
</evidence>
<evidence type="ECO:0000255" key="4"/>
<evidence type="ECO:0000305" key="5"/>
<evidence type="ECO:0000312" key="6">
    <source>
        <dbReference type="EMBL" id="AAW80684.1"/>
    </source>
</evidence>
<feature type="signal peptide" evidence="3">
    <location>
        <begin position="1"/>
        <end position="19"/>
    </location>
</feature>
<feature type="chain" id="PRO_5000094261" description="Pheromone-binding protein Gp-9" evidence="3">
    <location>
        <begin position="20"/>
        <end position="153"/>
    </location>
</feature>
<feature type="disulfide bond" evidence="2">
    <location>
        <begin position="37"/>
        <end position="77"/>
    </location>
</feature>
<feature type="disulfide bond" evidence="2">
    <location>
        <begin position="73"/>
        <end position="129"/>
    </location>
</feature>
<feature type="disulfide bond" evidence="2">
    <location>
        <begin position="118"/>
        <end position="138"/>
    </location>
</feature>
<comment type="function">
    <text evidence="3">Colony queen number, a major feature of social organization, is associated with worker genotype for Gp-9. Colonies are headed by either a single reproductive queen (monogyne form) or multiple queens (polygyne form). Differences in worker Gp-9 genotypes between social forms may cause differences in workers' abilities to recognize queens and regulate their numbers (By similarity).</text>
</comment>
<comment type="subunit">
    <text evidence="2">Homodimer.</text>
</comment>
<comment type="subcellular location">
    <subcellularLocation>
        <location evidence="1">Secreted</location>
    </subcellularLocation>
</comment>
<comment type="similarity">
    <text evidence="4">Belongs to the PBP/GOBP family.</text>
</comment>
<gene>
    <name evidence="6" type="primary">Gp-9</name>
</gene>
<protein>
    <recommendedName>
        <fullName>Pheromone-binding protein Gp-9</fullName>
        <shortName>PBP</shortName>
    </recommendedName>
    <alternativeName>
        <fullName>Putative odorant-binding protein Gp-9</fullName>
    </alternativeName>
</protein>
<accession>Q5EP14</accession>
<dbReference type="EMBL" id="AY818617">
    <property type="protein sequence ID" value="AAW80684.1"/>
    <property type="molecule type" value="Genomic_DNA"/>
</dbReference>
<dbReference type="SMR" id="Q5EP14"/>
<dbReference type="GO" id="GO:0005615">
    <property type="term" value="C:extracellular space"/>
    <property type="evidence" value="ECO:0000250"/>
    <property type="project" value="UniProtKB"/>
</dbReference>
<dbReference type="GO" id="GO:0005550">
    <property type="term" value="F:pheromone binding"/>
    <property type="evidence" value="ECO:0007669"/>
    <property type="project" value="UniProtKB-KW"/>
</dbReference>
<dbReference type="GO" id="GO:0019236">
    <property type="term" value="P:response to pheromone"/>
    <property type="evidence" value="ECO:0007669"/>
    <property type="project" value="UniProtKB-KW"/>
</dbReference>
<dbReference type="GO" id="GO:0035176">
    <property type="term" value="P:social behavior"/>
    <property type="evidence" value="ECO:0000250"/>
    <property type="project" value="UniProtKB"/>
</dbReference>
<dbReference type="CDD" id="cd23992">
    <property type="entry name" value="PBP_GOBP"/>
    <property type="match status" value="1"/>
</dbReference>
<dbReference type="FunFam" id="1.10.238.20:FF:000004">
    <property type="entry name" value="Pheromone-binding protein Gp-9"/>
    <property type="match status" value="1"/>
</dbReference>
<dbReference type="Gene3D" id="1.10.238.20">
    <property type="entry name" value="Pheromone/general odorant binding protein domain"/>
    <property type="match status" value="1"/>
</dbReference>
<dbReference type="InterPro" id="IPR006170">
    <property type="entry name" value="PBP/GOBP"/>
</dbReference>
<dbReference type="InterPro" id="IPR036728">
    <property type="entry name" value="PBP_GOBP_sf"/>
</dbReference>
<dbReference type="InterPro" id="IPR022354">
    <property type="entry name" value="Pheromone-bd_protein_Gp-9"/>
</dbReference>
<dbReference type="Pfam" id="PF01395">
    <property type="entry name" value="PBP_GOBP"/>
    <property type="match status" value="1"/>
</dbReference>
<dbReference type="PRINTS" id="PR02007">
    <property type="entry name" value="ODORANTBPGP9"/>
</dbReference>
<dbReference type="SUPFAM" id="SSF47565">
    <property type="entry name" value="Insect pheromone/odorant-binding proteins"/>
    <property type="match status" value="1"/>
</dbReference>
<reference evidence="5 6" key="1">
    <citation type="journal article" date="2005" name="Mol. Biol. Evol.">
        <title>Molecular evolutionary analyses of the odorant-binding protein gene Gp-9 in fire ants and other Solenopsis species.</title>
        <authorList>
            <person name="Krieger M.J.B."/>
            <person name="Ross K.G."/>
        </authorList>
    </citation>
    <scope>NUCLEOTIDE SEQUENCE [GENOMIC DNA] (ALLELE B)</scope>
</reference>
<sequence>MKTFVLHIFIFALVAFASASRDSAKKIGSQYDNYETCLTEHGLTEDDIFSIGEVSSGQHKTNHEDTELHKNGCVMQCMLEKDGLMSGADYDEEKMREDYIKETGAQPGDQRIEALNACMQETKDMEDKCDKSLILVACVLAAEAVLADSSEGA</sequence>
<keyword id="KW-0085">Behavior</keyword>
<keyword id="KW-1015">Disulfide bond</keyword>
<keyword id="KW-0589">Pheromone response</keyword>
<keyword id="KW-0590">Pheromone-binding</keyword>
<keyword id="KW-0964">Secreted</keyword>
<keyword id="KW-0732">Signal</keyword>
<keyword id="KW-0813">Transport</keyword>